<dbReference type="EC" id="3.1.-.-" evidence="1"/>
<dbReference type="EMBL" id="CM000620">
    <property type="protein sequence ID" value="EEC45444.1"/>
    <property type="molecule type" value="Genomic_DNA"/>
</dbReference>
<dbReference type="RefSeq" id="XP_002183226.1">
    <property type="nucleotide sequence ID" value="XM_002183190.1"/>
</dbReference>
<dbReference type="SMR" id="B7G7Y7"/>
<dbReference type="FunCoup" id="B7G7Y7">
    <property type="interactions" value="532"/>
</dbReference>
<dbReference type="STRING" id="556484.B7G7Y7"/>
<dbReference type="PaxDb" id="2850-Phatr48638"/>
<dbReference type="EnsemblProtists" id="Phatr3_J48638.t1">
    <property type="protein sequence ID" value="Phatr3_J48638.p1"/>
    <property type="gene ID" value="Phatr3_J48638"/>
</dbReference>
<dbReference type="GeneID" id="7194839"/>
<dbReference type="KEGG" id="pti:PHATRDRAFT_48638"/>
<dbReference type="eggNOG" id="KOG2519">
    <property type="taxonomic scope" value="Eukaryota"/>
</dbReference>
<dbReference type="HOGENOM" id="CLU_032444_2_0_1"/>
<dbReference type="InParanoid" id="B7G7Y7"/>
<dbReference type="OMA" id="MGIPWVQ"/>
<dbReference type="OrthoDB" id="1937206at2759"/>
<dbReference type="Proteomes" id="UP000000759">
    <property type="component" value="Chromosome 18"/>
</dbReference>
<dbReference type="GO" id="GO:0005739">
    <property type="term" value="C:mitochondrion"/>
    <property type="evidence" value="ECO:0007669"/>
    <property type="project" value="UniProtKB-SubCell"/>
</dbReference>
<dbReference type="GO" id="GO:0005730">
    <property type="term" value="C:nucleolus"/>
    <property type="evidence" value="ECO:0007669"/>
    <property type="project" value="UniProtKB-SubCell"/>
</dbReference>
<dbReference type="GO" id="GO:0005654">
    <property type="term" value="C:nucleoplasm"/>
    <property type="evidence" value="ECO:0007669"/>
    <property type="project" value="UniProtKB-SubCell"/>
</dbReference>
<dbReference type="GO" id="GO:0008409">
    <property type="term" value="F:5'-3' exonuclease activity"/>
    <property type="evidence" value="ECO:0007669"/>
    <property type="project" value="UniProtKB-UniRule"/>
</dbReference>
<dbReference type="GO" id="GO:0017108">
    <property type="term" value="F:5'-flap endonuclease activity"/>
    <property type="evidence" value="ECO:0007669"/>
    <property type="project" value="UniProtKB-UniRule"/>
</dbReference>
<dbReference type="GO" id="GO:0003677">
    <property type="term" value="F:DNA binding"/>
    <property type="evidence" value="ECO:0007669"/>
    <property type="project" value="UniProtKB-UniRule"/>
</dbReference>
<dbReference type="GO" id="GO:0000287">
    <property type="term" value="F:magnesium ion binding"/>
    <property type="evidence" value="ECO:0007669"/>
    <property type="project" value="UniProtKB-UniRule"/>
</dbReference>
<dbReference type="GO" id="GO:0006284">
    <property type="term" value="P:base-excision repair"/>
    <property type="evidence" value="ECO:0007669"/>
    <property type="project" value="UniProtKB-UniRule"/>
</dbReference>
<dbReference type="GO" id="GO:0043137">
    <property type="term" value="P:DNA replication, removal of RNA primer"/>
    <property type="evidence" value="ECO:0007669"/>
    <property type="project" value="UniProtKB-UniRule"/>
</dbReference>
<dbReference type="CDD" id="cd09907">
    <property type="entry name" value="H3TH_FEN1-Euk"/>
    <property type="match status" value="1"/>
</dbReference>
<dbReference type="CDD" id="cd09867">
    <property type="entry name" value="PIN_FEN1"/>
    <property type="match status" value="1"/>
</dbReference>
<dbReference type="FunFam" id="1.10.150.20:FF:000009">
    <property type="entry name" value="Flap endonuclease 1"/>
    <property type="match status" value="1"/>
</dbReference>
<dbReference type="FunFam" id="3.40.50.1010:FF:000016">
    <property type="entry name" value="Flap endonuclease 1"/>
    <property type="match status" value="1"/>
</dbReference>
<dbReference type="Gene3D" id="1.10.150.20">
    <property type="entry name" value="5' to 3' exonuclease, C-terminal subdomain"/>
    <property type="match status" value="1"/>
</dbReference>
<dbReference type="Gene3D" id="3.40.50.1010">
    <property type="entry name" value="5'-nuclease"/>
    <property type="match status" value="1"/>
</dbReference>
<dbReference type="HAMAP" id="MF_00614">
    <property type="entry name" value="Fen"/>
    <property type="match status" value="1"/>
</dbReference>
<dbReference type="InterPro" id="IPR036279">
    <property type="entry name" value="5-3_exonuclease_C_sf"/>
</dbReference>
<dbReference type="InterPro" id="IPR023426">
    <property type="entry name" value="Flap_endonuc"/>
</dbReference>
<dbReference type="InterPro" id="IPR008918">
    <property type="entry name" value="HhH2"/>
</dbReference>
<dbReference type="InterPro" id="IPR029060">
    <property type="entry name" value="PIN-like_dom_sf"/>
</dbReference>
<dbReference type="InterPro" id="IPR006086">
    <property type="entry name" value="XPG-I_dom"/>
</dbReference>
<dbReference type="InterPro" id="IPR006084">
    <property type="entry name" value="XPG/Rad2"/>
</dbReference>
<dbReference type="InterPro" id="IPR019974">
    <property type="entry name" value="XPG_CS"/>
</dbReference>
<dbReference type="InterPro" id="IPR006085">
    <property type="entry name" value="XPG_DNA_repair_N"/>
</dbReference>
<dbReference type="PANTHER" id="PTHR11081:SF9">
    <property type="entry name" value="FLAP ENDONUCLEASE 1"/>
    <property type="match status" value="1"/>
</dbReference>
<dbReference type="PANTHER" id="PTHR11081">
    <property type="entry name" value="FLAP ENDONUCLEASE FAMILY MEMBER"/>
    <property type="match status" value="1"/>
</dbReference>
<dbReference type="Pfam" id="PF00867">
    <property type="entry name" value="XPG_I"/>
    <property type="match status" value="1"/>
</dbReference>
<dbReference type="Pfam" id="PF00752">
    <property type="entry name" value="XPG_N"/>
    <property type="match status" value="1"/>
</dbReference>
<dbReference type="PRINTS" id="PR00853">
    <property type="entry name" value="XPGRADSUPER"/>
</dbReference>
<dbReference type="SMART" id="SM00279">
    <property type="entry name" value="HhH2"/>
    <property type="match status" value="1"/>
</dbReference>
<dbReference type="SMART" id="SM00484">
    <property type="entry name" value="XPGI"/>
    <property type="match status" value="1"/>
</dbReference>
<dbReference type="SMART" id="SM00485">
    <property type="entry name" value="XPGN"/>
    <property type="match status" value="1"/>
</dbReference>
<dbReference type="SUPFAM" id="SSF47807">
    <property type="entry name" value="5' to 3' exonuclease, C-terminal subdomain"/>
    <property type="match status" value="1"/>
</dbReference>
<dbReference type="SUPFAM" id="SSF88723">
    <property type="entry name" value="PIN domain-like"/>
    <property type="match status" value="1"/>
</dbReference>
<dbReference type="PROSITE" id="PS00841">
    <property type="entry name" value="XPG_1"/>
    <property type="match status" value="1"/>
</dbReference>
<keyword id="KW-0227">DNA damage</keyword>
<keyword id="KW-0234">DNA repair</keyword>
<keyword id="KW-0235">DNA replication</keyword>
<keyword id="KW-0255">Endonuclease</keyword>
<keyword id="KW-0269">Exonuclease</keyword>
<keyword id="KW-0378">Hydrolase</keyword>
<keyword id="KW-0460">Magnesium</keyword>
<keyword id="KW-0479">Metal-binding</keyword>
<keyword id="KW-0496">Mitochondrion</keyword>
<keyword id="KW-0540">Nuclease</keyword>
<keyword id="KW-0539">Nucleus</keyword>
<keyword id="KW-0597">Phosphoprotein</keyword>
<keyword id="KW-1185">Reference proteome</keyword>
<organism>
    <name type="scientific">Phaeodactylum tricornutum (strain CCAP 1055/1)</name>
    <dbReference type="NCBI Taxonomy" id="556484"/>
    <lineage>
        <taxon>Eukaryota</taxon>
        <taxon>Sar</taxon>
        <taxon>Stramenopiles</taxon>
        <taxon>Ochrophyta</taxon>
        <taxon>Bacillariophyta</taxon>
        <taxon>Bacillariophyceae</taxon>
        <taxon>Bacillariophycidae</taxon>
        <taxon>Naviculales</taxon>
        <taxon>Phaeodactylaceae</taxon>
        <taxon>Phaeodactylum</taxon>
    </lineage>
</organism>
<accession>B7G7Y7</accession>
<feature type="chain" id="PRO_0000403552" description="Flap endonuclease 1">
    <location>
        <begin position="1"/>
        <end position="421"/>
    </location>
</feature>
<feature type="region of interest" description="N-domain">
    <location>
        <begin position="1"/>
        <end position="109"/>
    </location>
</feature>
<feature type="region of interest" description="I-domain">
    <location>
        <begin position="127"/>
        <end position="258"/>
    </location>
</feature>
<feature type="region of interest" description="Disordered" evidence="2">
    <location>
        <begin position="284"/>
        <end position="307"/>
    </location>
</feature>
<feature type="region of interest" description="Interaction with PCNA" evidence="1">
    <location>
        <begin position="379"/>
        <end position="387"/>
    </location>
</feature>
<feature type="region of interest" description="Disordered" evidence="2">
    <location>
        <begin position="398"/>
        <end position="421"/>
    </location>
</feature>
<feature type="compositionally biased region" description="Acidic residues" evidence="2">
    <location>
        <begin position="289"/>
        <end position="298"/>
    </location>
</feature>
<feature type="binding site" evidence="1">
    <location>
        <position position="34"/>
    </location>
    <ligand>
        <name>Mg(2+)</name>
        <dbReference type="ChEBI" id="CHEBI:18420"/>
        <label>1</label>
    </ligand>
</feature>
<feature type="binding site" evidence="1">
    <location>
        <position position="47"/>
    </location>
    <ligand>
        <name>DNA</name>
        <dbReference type="ChEBI" id="CHEBI:16991"/>
    </ligand>
</feature>
<feature type="binding site" evidence="1">
    <location>
        <position position="75"/>
    </location>
    <ligand>
        <name>DNA</name>
        <dbReference type="ChEBI" id="CHEBI:16991"/>
    </ligand>
</feature>
<feature type="binding site" evidence="1">
    <location>
        <position position="91"/>
    </location>
    <ligand>
        <name>Mg(2+)</name>
        <dbReference type="ChEBI" id="CHEBI:18420"/>
        <label>1</label>
    </ligand>
</feature>
<feature type="binding site" evidence="1">
    <location>
        <position position="163"/>
    </location>
    <ligand>
        <name>DNA</name>
        <dbReference type="ChEBI" id="CHEBI:16991"/>
    </ligand>
</feature>
<feature type="binding site" evidence="1">
    <location>
        <position position="163"/>
    </location>
    <ligand>
        <name>Mg(2+)</name>
        <dbReference type="ChEBI" id="CHEBI:18420"/>
        <label>1</label>
    </ligand>
</feature>
<feature type="binding site" evidence="1">
    <location>
        <position position="165"/>
    </location>
    <ligand>
        <name>Mg(2+)</name>
        <dbReference type="ChEBI" id="CHEBI:18420"/>
        <label>1</label>
    </ligand>
</feature>
<feature type="binding site" evidence="1">
    <location>
        <position position="184"/>
    </location>
    <ligand>
        <name>Mg(2+)</name>
        <dbReference type="ChEBI" id="CHEBI:18420"/>
        <label>2</label>
    </ligand>
</feature>
<feature type="binding site" evidence="1">
    <location>
        <position position="186"/>
    </location>
    <ligand>
        <name>Mg(2+)</name>
        <dbReference type="ChEBI" id="CHEBI:18420"/>
        <label>2</label>
    </ligand>
</feature>
<feature type="binding site" evidence="1">
    <location>
        <position position="236"/>
    </location>
    <ligand>
        <name>DNA</name>
        <dbReference type="ChEBI" id="CHEBI:16991"/>
    </ligand>
</feature>
<feature type="binding site" evidence="1">
    <location>
        <position position="238"/>
    </location>
    <ligand>
        <name>DNA</name>
        <dbReference type="ChEBI" id="CHEBI:16991"/>
    </ligand>
</feature>
<feature type="binding site" evidence="1">
    <location>
        <position position="238"/>
    </location>
    <ligand>
        <name>Mg(2+)</name>
        <dbReference type="ChEBI" id="CHEBI:18420"/>
        <label>2</label>
    </ligand>
</feature>
<proteinExistence type="inferred from homology"/>
<evidence type="ECO:0000255" key="1">
    <source>
        <dbReference type="HAMAP-Rule" id="MF_03140"/>
    </source>
</evidence>
<evidence type="ECO:0000256" key="2">
    <source>
        <dbReference type="SAM" id="MobiDB-lite"/>
    </source>
</evidence>
<reference key="1">
    <citation type="journal article" date="2008" name="Nature">
        <title>The Phaeodactylum genome reveals the evolutionary history of diatom genomes.</title>
        <authorList>
            <person name="Bowler C."/>
            <person name="Allen A.E."/>
            <person name="Badger J.H."/>
            <person name="Grimwood J."/>
            <person name="Jabbari K."/>
            <person name="Kuo A."/>
            <person name="Maheswari U."/>
            <person name="Martens C."/>
            <person name="Maumus F."/>
            <person name="Otillar R.P."/>
            <person name="Rayko E."/>
            <person name="Salamov A."/>
            <person name="Vandepoele K."/>
            <person name="Beszteri B."/>
            <person name="Gruber A."/>
            <person name="Heijde M."/>
            <person name="Katinka M."/>
            <person name="Mock T."/>
            <person name="Valentin K."/>
            <person name="Verret F."/>
            <person name="Berges J.A."/>
            <person name="Brownlee C."/>
            <person name="Cadoret J.P."/>
            <person name="Chiovitti A."/>
            <person name="Choi C.J."/>
            <person name="Coesel S."/>
            <person name="De Martino A."/>
            <person name="Detter J.C."/>
            <person name="Durkin C."/>
            <person name="Falciatore A."/>
            <person name="Fournet J."/>
            <person name="Haruta M."/>
            <person name="Huysman M.J."/>
            <person name="Jenkins B.D."/>
            <person name="Jiroutova K."/>
            <person name="Jorgensen R.E."/>
            <person name="Joubert Y."/>
            <person name="Kaplan A."/>
            <person name="Kroger N."/>
            <person name="Kroth P.G."/>
            <person name="La Roche J."/>
            <person name="Lindquist E."/>
            <person name="Lommer M."/>
            <person name="Martin-Jezequel V."/>
            <person name="Lopez P.J."/>
            <person name="Lucas S."/>
            <person name="Mangogna M."/>
            <person name="McGinnis K."/>
            <person name="Medlin L.K."/>
            <person name="Montsant A."/>
            <person name="Oudot-Le Secq M.P."/>
            <person name="Napoli C."/>
            <person name="Obornik M."/>
            <person name="Parker M.S."/>
            <person name="Petit J.L."/>
            <person name="Porcel B.M."/>
            <person name="Poulsen N."/>
            <person name="Robison M."/>
            <person name="Rychlewski L."/>
            <person name="Rynearson T.A."/>
            <person name="Schmutz J."/>
            <person name="Shapiro H."/>
            <person name="Siaut M."/>
            <person name="Stanley M."/>
            <person name="Sussman M.R."/>
            <person name="Taylor A.R."/>
            <person name="Vardi A."/>
            <person name="von Dassow P."/>
            <person name="Vyverman W."/>
            <person name="Willis A."/>
            <person name="Wyrwicz L.S."/>
            <person name="Rokhsar D.S."/>
            <person name="Weissenbach J."/>
            <person name="Armbrust E.V."/>
            <person name="Green B.R."/>
            <person name="Van de Peer Y."/>
            <person name="Grigoriev I.V."/>
        </authorList>
    </citation>
    <scope>NUCLEOTIDE SEQUENCE [LARGE SCALE GENOMIC DNA]</scope>
    <source>
        <strain>CCAP 1055/1</strain>
    </source>
</reference>
<reference key="2">
    <citation type="submission" date="2008-08" db="EMBL/GenBank/DDBJ databases">
        <authorList>
            <consortium name="Diatom Consortium"/>
            <person name="Grigoriev I."/>
            <person name="Grimwood J."/>
            <person name="Kuo A."/>
            <person name="Otillar R.P."/>
            <person name="Salamov A."/>
            <person name="Detter J.C."/>
            <person name="Lindquist E."/>
            <person name="Shapiro H."/>
            <person name="Lucas S."/>
            <person name="Glavina del Rio T."/>
            <person name="Pitluck S."/>
            <person name="Rokhsar D."/>
            <person name="Bowler C."/>
        </authorList>
    </citation>
    <scope>GENOME REANNOTATION</scope>
    <source>
        <strain>CCAP 1055/1</strain>
    </source>
</reference>
<comment type="function">
    <text evidence="1">Structure-specific nuclease with 5'-flap endonuclease and 5'-3' exonuclease activities involved in DNA replication and repair. During DNA replication, cleaves the 5'-overhanging flap structure that is generated by displacement synthesis when DNA polymerase encounters the 5'-end of a downstream Okazaki fragment. It enters the flap from the 5'-end and then tracks to cleave the flap base, leaving a nick for ligation. Also involved in the long patch base excision repair (LP-BER) pathway, by cleaving within the apurinic/apyrimidinic (AP) site-terminated flap. Acts as a genome stabilization factor that prevents flaps from equilibrating into structures that lead to duplications and deletions. Also possesses 5'-3' exonuclease activity on nicked or gapped double-stranded DNA, and exhibits RNase H activity. Also involved in replication and repair of rDNA and in repairing mitochondrial DNA.</text>
</comment>
<comment type="cofactor">
    <cofactor evidence="1">
        <name>Mg(2+)</name>
        <dbReference type="ChEBI" id="CHEBI:18420"/>
    </cofactor>
    <text evidence="1">Binds 2 magnesium ions per subunit. They probably participate in the reaction catalyzed by the enzyme. May bind an additional third magnesium ion after substrate binding.</text>
</comment>
<comment type="subunit">
    <text evidence="1">Interacts with PCNA. Three molecules of FEN1 bind to one PCNA trimer with each molecule binding to one PCNA monomer. PCNA stimulates the nuclease activity without altering cleavage specificity.</text>
</comment>
<comment type="subcellular location">
    <subcellularLocation>
        <location evidence="1">Nucleus</location>
        <location evidence="1">Nucleolus</location>
    </subcellularLocation>
    <subcellularLocation>
        <location evidence="1">Nucleus</location>
        <location evidence="1">Nucleoplasm</location>
    </subcellularLocation>
    <subcellularLocation>
        <location evidence="1">Mitochondrion</location>
    </subcellularLocation>
    <text evidence="1">Resides mostly in the nucleoli and relocalizes to the nucleoplasm upon DNA damage.</text>
</comment>
<comment type="PTM">
    <text evidence="1">Phosphorylated. Phosphorylation upon DNA damage induces relocalization to the nuclear plasma.</text>
</comment>
<comment type="similarity">
    <text evidence="1">Belongs to the XPG/RAD2 endonuclease family. FEN1 subfamily.</text>
</comment>
<sequence length="421" mass="46668">MGIKGLAKLLSDEAPDCIREVELKSLHGRKIAIDASMAIYQFLIAVRSGGPNQQATMLTNAEGETTSHIQGMFNRTIRYMTEGIRPVFVFDGKPPDVKSHELIKRREKREKAQAALAVASEEGNVEEQDKQSKRLVRAGTKENEDCRKLLTLMGVPVVTAPCEAEAQAAALCKAGLVYATGTEDMDALTFATPILVRKLTFANASKSMVQTMNYNKVIEGLAISHDQFVDLCIMLGCDYCDTIRGVGPKTALKLIREHGNIEKVIETIDRKKFVVPESWVPNEKKLDAQSDDDDEEGVESPSKEENNGIVDTEELIPAYVQARKLFNEHEVLNDIELKWKPCQAEDLQKFLVDDMGFNVDRVKNNIEKLQAAYKANSKPQTRMDSFFAVKANPNAAKSAAKRKADAAKAKAAVSKKKTKKH</sequence>
<gene>
    <name evidence="1" type="primary">FEN1</name>
    <name type="ORF">PHATRDRAFT_48638</name>
</gene>
<name>FEN1_PHATC</name>
<protein>
    <recommendedName>
        <fullName evidence="1">Flap endonuclease 1</fullName>
        <shortName evidence="1">FEN-1</shortName>
        <ecNumber evidence="1">3.1.-.-</ecNumber>
    </recommendedName>
    <alternativeName>
        <fullName evidence="1">Flap structure-specific endonuclease 1</fullName>
    </alternativeName>
</protein>